<feature type="chain" id="PRO_1000040437" description="6,7-dimethyl-8-ribityllumazine synthase">
    <location>
        <begin position="1"/>
        <end position="157"/>
    </location>
</feature>
<feature type="active site" description="Proton donor" evidence="1">
    <location>
        <position position="88"/>
    </location>
</feature>
<feature type="binding site" evidence="1">
    <location>
        <position position="22"/>
    </location>
    <ligand>
        <name>5-amino-6-(D-ribitylamino)uracil</name>
        <dbReference type="ChEBI" id="CHEBI:15934"/>
    </ligand>
</feature>
<feature type="binding site" evidence="1">
    <location>
        <begin position="56"/>
        <end position="58"/>
    </location>
    <ligand>
        <name>5-amino-6-(D-ribitylamino)uracil</name>
        <dbReference type="ChEBI" id="CHEBI:15934"/>
    </ligand>
</feature>
<feature type="binding site" evidence="1">
    <location>
        <begin position="80"/>
        <end position="82"/>
    </location>
    <ligand>
        <name>5-amino-6-(D-ribitylamino)uracil</name>
        <dbReference type="ChEBI" id="CHEBI:15934"/>
    </ligand>
</feature>
<feature type="binding site" evidence="1">
    <location>
        <begin position="85"/>
        <end position="86"/>
    </location>
    <ligand>
        <name>(2S)-2-hydroxy-3-oxobutyl phosphate</name>
        <dbReference type="ChEBI" id="CHEBI:58830"/>
    </ligand>
</feature>
<feature type="binding site" evidence="1">
    <location>
        <position position="113"/>
    </location>
    <ligand>
        <name>5-amino-6-(D-ribitylamino)uracil</name>
        <dbReference type="ChEBI" id="CHEBI:15934"/>
    </ligand>
</feature>
<feature type="binding site" evidence="1">
    <location>
        <position position="127"/>
    </location>
    <ligand>
        <name>(2S)-2-hydroxy-3-oxobutyl phosphate</name>
        <dbReference type="ChEBI" id="CHEBI:58830"/>
    </ligand>
</feature>
<organism>
    <name type="scientific">Levilactobacillus brevis (strain ATCC 367 / BCRC 12310 / CIP 105137 / JCM 1170 / LMG 11437 / NCIMB 947 / NCTC 947)</name>
    <name type="common">Lactobacillus brevis</name>
    <dbReference type="NCBI Taxonomy" id="387344"/>
    <lineage>
        <taxon>Bacteria</taxon>
        <taxon>Bacillati</taxon>
        <taxon>Bacillota</taxon>
        <taxon>Bacilli</taxon>
        <taxon>Lactobacillales</taxon>
        <taxon>Lactobacillaceae</taxon>
        <taxon>Levilactobacillus</taxon>
    </lineage>
</organism>
<dbReference type="EC" id="2.5.1.78" evidence="1"/>
<dbReference type="EMBL" id="CP000416">
    <property type="protein sequence ID" value="ABJ64725.1"/>
    <property type="molecule type" value="Genomic_DNA"/>
</dbReference>
<dbReference type="RefSeq" id="WP_011668349.1">
    <property type="nucleotide sequence ID" value="NC_008497.1"/>
</dbReference>
<dbReference type="SMR" id="Q03PZ7"/>
<dbReference type="STRING" id="387344.LVIS_1650"/>
<dbReference type="GeneID" id="56993511"/>
<dbReference type="KEGG" id="lbr:LVIS_1650"/>
<dbReference type="eggNOG" id="COG0054">
    <property type="taxonomic scope" value="Bacteria"/>
</dbReference>
<dbReference type="HOGENOM" id="CLU_089358_1_1_9"/>
<dbReference type="UniPathway" id="UPA00275">
    <property type="reaction ID" value="UER00404"/>
</dbReference>
<dbReference type="Proteomes" id="UP000001652">
    <property type="component" value="Chromosome"/>
</dbReference>
<dbReference type="GO" id="GO:0005829">
    <property type="term" value="C:cytosol"/>
    <property type="evidence" value="ECO:0007669"/>
    <property type="project" value="TreeGrafter"/>
</dbReference>
<dbReference type="GO" id="GO:0009349">
    <property type="term" value="C:riboflavin synthase complex"/>
    <property type="evidence" value="ECO:0007669"/>
    <property type="project" value="InterPro"/>
</dbReference>
<dbReference type="GO" id="GO:0000906">
    <property type="term" value="F:6,7-dimethyl-8-ribityllumazine synthase activity"/>
    <property type="evidence" value="ECO:0007669"/>
    <property type="project" value="UniProtKB-UniRule"/>
</dbReference>
<dbReference type="GO" id="GO:0009231">
    <property type="term" value="P:riboflavin biosynthetic process"/>
    <property type="evidence" value="ECO:0007669"/>
    <property type="project" value="UniProtKB-UniRule"/>
</dbReference>
<dbReference type="CDD" id="cd09209">
    <property type="entry name" value="Lumazine_synthase-I"/>
    <property type="match status" value="1"/>
</dbReference>
<dbReference type="Gene3D" id="3.40.50.960">
    <property type="entry name" value="Lumazine/riboflavin synthase"/>
    <property type="match status" value="1"/>
</dbReference>
<dbReference type="HAMAP" id="MF_00178">
    <property type="entry name" value="Lumazine_synth"/>
    <property type="match status" value="1"/>
</dbReference>
<dbReference type="InterPro" id="IPR034964">
    <property type="entry name" value="LS"/>
</dbReference>
<dbReference type="InterPro" id="IPR002180">
    <property type="entry name" value="LS/RS"/>
</dbReference>
<dbReference type="InterPro" id="IPR036467">
    <property type="entry name" value="LS/RS_sf"/>
</dbReference>
<dbReference type="NCBIfam" id="TIGR00114">
    <property type="entry name" value="lumazine-synth"/>
    <property type="match status" value="1"/>
</dbReference>
<dbReference type="PANTHER" id="PTHR21058:SF0">
    <property type="entry name" value="6,7-DIMETHYL-8-RIBITYLLUMAZINE SYNTHASE"/>
    <property type="match status" value="1"/>
</dbReference>
<dbReference type="PANTHER" id="PTHR21058">
    <property type="entry name" value="6,7-DIMETHYL-8-RIBITYLLUMAZINE SYNTHASE DMRL SYNTHASE LUMAZINE SYNTHASE"/>
    <property type="match status" value="1"/>
</dbReference>
<dbReference type="Pfam" id="PF00885">
    <property type="entry name" value="DMRL_synthase"/>
    <property type="match status" value="1"/>
</dbReference>
<dbReference type="SUPFAM" id="SSF52121">
    <property type="entry name" value="Lumazine synthase"/>
    <property type="match status" value="1"/>
</dbReference>
<evidence type="ECO:0000255" key="1">
    <source>
        <dbReference type="HAMAP-Rule" id="MF_00178"/>
    </source>
</evidence>
<comment type="function">
    <text evidence="1">Catalyzes the formation of 6,7-dimethyl-8-ribityllumazine by condensation of 5-amino-6-(D-ribitylamino)uracil with 3,4-dihydroxy-2-butanone 4-phosphate. This is the penultimate step in the biosynthesis of riboflavin.</text>
</comment>
<comment type="catalytic activity">
    <reaction evidence="1">
        <text>(2S)-2-hydroxy-3-oxobutyl phosphate + 5-amino-6-(D-ribitylamino)uracil = 6,7-dimethyl-8-(1-D-ribityl)lumazine + phosphate + 2 H2O + H(+)</text>
        <dbReference type="Rhea" id="RHEA:26152"/>
        <dbReference type="ChEBI" id="CHEBI:15377"/>
        <dbReference type="ChEBI" id="CHEBI:15378"/>
        <dbReference type="ChEBI" id="CHEBI:15934"/>
        <dbReference type="ChEBI" id="CHEBI:43474"/>
        <dbReference type="ChEBI" id="CHEBI:58201"/>
        <dbReference type="ChEBI" id="CHEBI:58830"/>
        <dbReference type="EC" id="2.5.1.78"/>
    </reaction>
</comment>
<comment type="pathway">
    <text evidence="1">Cofactor biosynthesis; riboflavin biosynthesis; riboflavin from 2-hydroxy-3-oxobutyl phosphate and 5-amino-6-(D-ribitylamino)uracil: step 1/2.</text>
</comment>
<comment type="similarity">
    <text evidence="1">Belongs to the DMRL synthase family.</text>
</comment>
<sequence>MTEILGLPITRPVKVGIVVADFNDLVTTRLLAGAQQALRQAGIPEENILVVQVPGAMELPRVTRRLSETGVIDGVIALGAVVQGETDHYTYVCQQSAAGLAQASLTGPIPVMFGVLMTANMDQALNRAGGKGGNKGRECAQALLQVLSVEQQLSELR</sequence>
<proteinExistence type="inferred from homology"/>
<accession>Q03PZ7</accession>
<keyword id="KW-1185">Reference proteome</keyword>
<keyword id="KW-0686">Riboflavin biosynthesis</keyword>
<keyword id="KW-0808">Transferase</keyword>
<gene>
    <name evidence="1" type="primary">ribH</name>
    <name type="ordered locus">LVIS_1650</name>
</gene>
<name>RISB_LEVBA</name>
<reference key="1">
    <citation type="journal article" date="2006" name="Proc. Natl. Acad. Sci. U.S.A.">
        <title>Comparative genomics of the lactic acid bacteria.</title>
        <authorList>
            <person name="Makarova K.S."/>
            <person name="Slesarev A."/>
            <person name="Wolf Y.I."/>
            <person name="Sorokin A."/>
            <person name="Mirkin B."/>
            <person name="Koonin E.V."/>
            <person name="Pavlov A."/>
            <person name="Pavlova N."/>
            <person name="Karamychev V."/>
            <person name="Polouchine N."/>
            <person name="Shakhova V."/>
            <person name="Grigoriev I."/>
            <person name="Lou Y."/>
            <person name="Rohksar D."/>
            <person name="Lucas S."/>
            <person name="Huang K."/>
            <person name="Goodstein D.M."/>
            <person name="Hawkins T."/>
            <person name="Plengvidhya V."/>
            <person name="Welker D."/>
            <person name="Hughes J."/>
            <person name="Goh Y."/>
            <person name="Benson A."/>
            <person name="Baldwin K."/>
            <person name="Lee J.-H."/>
            <person name="Diaz-Muniz I."/>
            <person name="Dosti B."/>
            <person name="Smeianov V."/>
            <person name="Wechter W."/>
            <person name="Barabote R."/>
            <person name="Lorca G."/>
            <person name="Altermann E."/>
            <person name="Barrangou R."/>
            <person name="Ganesan B."/>
            <person name="Xie Y."/>
            <person name="Rawsthorne H."/>
            <person name="Tamir D."/>
            <person name="Parker C."/>
            <person name="Breidt F."/>
            <person name="Broadbent J.R."/>
            <person name="Hutkins R."/>
            <person name="O'Sullivan D."/>
            <person name="Steele J."/>
            <person name="Unlu G."/>
            <person name="Saier M.H. Jr."/>
            <person name="Klaenhammer T."/>
            <person name="Richardson P."/>
            <person name="Kozyavkin S."/>
            <person name="Weimer B.C."/>
            <person name="Mills D.A."/>
        </authorList>
    </citation>
    <scope>NUCLEOTIDE SEQUENCE [LARGE SCALE GENOMIC DNA]</scope>
    <source>
        <strain>ATCC 367 / BCRC 12310 / CIP 105137 / JCM 1170 / LMG 11437 / NCIMB 947 / NCTC 947</strain>
    </source>
</reference>
<protein>
    <recommendedName>
        <fullName evidence="1">6,7-dimethyl-8-ribityllumazine synthase</fullName>
        <shortName evidence="1">DMRL synthase</shortName>
        <shortName evidence="1">LS</shortName>
        <shortName evidence="1">Lumazine synthase</shortName>
        <ecNumber evidence="1">2.5.1.78</ecNumber>
    </recommendedName>
</protein>